<organism>
    <name type="scientific">Bordetella parapertussis (strain 12822 / ATCC BAA-587 / NCTC 13253)</name>
    <dbReference type="NCBI Taxonomy" id="257311"/>
    <lineage>
        <taxon>Bacteria</taxon>
        <taxon>Pseudomonadati</taxon>
        <taxon>Pseudomonadota</taxon>
        <taxon>Betaproteobacteria</taxon>
        <taxon>Burkholderiales</taxon>
        <taxon>Alcaligenaceae</taxon>
        <taxon>Bordetella</taxon>
    </lineage>
</organism>
<keyword id="KW-0520">NAD</keyword>
<keyword id="KW-0560">Oxidoreductase</keyword>
<keyword id="KW-0816">Tricarboxylic acid cycle</keyword>
<gene>
    <name evidence="2" type="primary">mdh</name>
    <name type="ordered locus">BPP3232</name>
</gene>
<comment type="function">
    <text evidence="2">Catalyzes the reversible oxidation of malate to oxaloacetate.</text>
</comment>
<comment type="catalytic activity">
    <reaction evidence="2">
        <text>(S)-malate + NAD(+) = oxaloacetate + NADH + H(+)</text>
        <dbReference type="Rhea" id="RHEA:21432"/>
        <dbReference type="ChEBI" id="CHEBI:15378"/>
        <dbReference type="ChEBI" id="CHEBI:15589"/>
        <dbReference type="ChEBI" id="CHEBI:16452"/>
        <dbReference type="ChEBI" id="CHEBI:57540"/>
        <dbReference type="ChEBI" id="CHEBI:57945"/>
        <dbReference type="EC" id="1.1.1.37"/>
    </reaction>
</comment>
<comment type="similarity">
    <text evidence="2">Belongs to the LDH/MDH superfamily. MDH type 2 family.</text>
</comment>
<accession>Q7W5Q8</accession>
<dbReference type="EC" id="1.1.1.37" evidence="2"/>
<dbReference type="EMBL" id="BX640433">
    <property type="protein sequence ID" value="CAE38517.1"/>
    <property type="molecule type" value="Genomic_DNA"/>
</dbReference>
<dbReference type="RefSeq" id="WP_003813657.1">
    <property type="nucleotide sequence ID" value="NC_002928.3"/>
</dbReference>
<dbReference type="SMR" id="Q7W5Q8"/>
<dbReference type="KEGG" id="bpa:BPP3232"/>
<dbReference type="HOGENOM" id="CLU_040727_2_0_4"/>
<dbReference type="Proteomes" id="UP000001421">
    <property type="component" value="Chromosome"/>
</dbReference>
<dbReference type="GO" id="GO:0030060">
    <property type="term" value="F:L-malate dehydrogenase (NAD+) activity"/>
    <property type="evidence" value="ECO:0007669"/>
    <property type="project" value="UniProtKB-UniRule"/>
</dbReference>
<dbReference type="GO" id="GO:0006108">
    <property type="term" value="P:malate metabolic process"/>
    <property type="evidence" value="ECO:0007669"/>
    <property type="project" value="InterPro"/>
</dbReference>
<dbReference type="GO" id="GO:0006099">
    <property type="term" value="P:tricarboxylic acid cycle"/>
    <property type="evidence" value="ECO:0007669"/>
    <property type="project" value="UniProtKB-UniRule"/>
</dbReference>
<dbReference type="CDD" id="cd01338">
    <property type="entry name" value="MDH_chloroplast-like"/>
    <property type="match status" value="1"/>
</dbReference>
<dbReference type="FunFam" id="3.40.50.720:FF:000010">
    <property type="entry name" value="Malate dehydrogenase"/>
    <property type="match status" value="1"/>
</dbReference>
<dbReference type="FunFam" id="3.90.110.10:FF:000002">
    <property type="entry name" value="Malate dehydrogenase"/>
    <property type="match status" value="1"/>
</dbReference>
<dbReference type="Gene3D" id="3.90.110.10">
    <property type="entry name" value="Lactate dehydrogenase/glycoside hydrolase, family 4, C-terminal"/>
    <property type="match status" value="1"/>
</dbReference>
<dbReference type="Gene3D" id="3.40.50.720">
    <property type="entry name" value="NAD(P)-binding Rossmann-like Domain"/>
    <property type="match status" value="1"/>
</dbReference>
<dbReference type="HAMAP" id="MF_01517">
    <property type="entry name" value="Malate_dehydrog_2"/>
    <property type="match status" value="1"/>
</dbReference>
<dbReference type="InterPro" id="IPR001557">
    <property type="entry name" value="L-lactate/malate_DH"/>
</dbReference>
<dbReference type="InterPro" id="IPR022383">
    <property type="entry name" value="Lactate/malate_DH_C"/>
</dbReference>
<dbReference type="InterPro" id="IPR001236">
    <property type="entry name" value="Lactate/malate_DH_N"/>
</dbReference>
<dbReference type="InterPro" id="IPR015955">
    <property type="entry name" value="Lactate_DH/Glyco_Ohase_4_C"/>
</dbReference>
<dbReference type="InterPro" id="IPR010945">
    <property type="entry name" value="Malate_DH_type2"/>
</dbReference>
<dbReference type="InterPro" id="IPR036291">
    <property type="entry name" value="NAD(P)-bd_dom_sf"/>
</dbReference>
<dbReference type="NCBIfam" id="TIGR01759">
    <property type="entry name" value="MalateDH-SF1"/>
    <property type="match status" value="1"/>
</dbReference>
<dbReference type="NCBIfam" id="NF003916">
    <property type="entry name" value="PRK05442.1"/>
    <property type="match status" value="1"/>
</dbReference>
<dbReference type="PANTHER" id="PTHR23382">
    <property type="entry name" value="MALATE DEHYDROGENASE"/>
    <property type="match status" value="1"/>
</dbReference>
<dbReference type="Pfam" id="PF02866">
    <property type="entry name" value="Ldh_1_C"/>
    <property type="match status" value="1"/>
</dbReference>
<dbReference type="Pfam" id="PF00056">
    <property type="entry name" value="Ldh_1_N"/>
    <property type="match status" value="1"/>
</dbReference>
<dbReference type="PIRSF" id="PIRSF000102">
    <property type="entry name" value="Lac_mal_DH"/>
    <property type="match status" value="1"/>
</dbReference>
<dbReference type="SUPFAM" id="SSF56327">
    <property type="entry name" value="LDH C-terminal domain-like"/>
    <property type="match status" value="1"/>
</dbReference>
<dbReference type="SUPFAM" id="SSF51735">
    <property type="entry name" value="NAD(P)-binding Rossmann-fold domains"/>
    <property type="match status" value="1"/>
</dbReference>
<name>MDH_BORPA</name>
<protein>
    <recommendedName>
        <fullName evidence="2">Malate dehydrogenase</fullName>
        <ecNumber evidence="2">1.1.1.37</ecNumber>
    </recommendedName>
</protein>
<reference key="1">
    <citation type="journal article" date="2003" name="Nat. Genet.">
        <title>Comparative analysis of the genome sequences of Bordetella pertussis, Bordetella parapertussis and Bordetella bronchiseptica.</title>
        <authorList>
            <person name="Parkhill J."/>
            <person name="Sebaihia M."/>
            <person name="Preston A."/>
            <person name="Murphy L.D."/>
            <person name="Thomson N.R."/>
            <person name="Harris D.E."/>
            <person name="Holden M.T.G."/>
            <person name="Churcher C.M."/>
            <person name="Bentley S.D."/>
            <person name="Mungall K.L."/>
            <person name="Cerdeno-Tarraga A.-M."/>
            <person name="Temple L."/>
            <person name="James K.D."/>
            <person name="Harris B."/>
            <person name="Quail M.A."/>
            <person name="Achtman M."/>
            <person name="Atkin R."/>
            <person name="Baker S."/>
            <person name="Basham D."/>
            <person name="Bason N."/>
            <person name="Cherevach I."/>
            <person name="Chillingworth T."/>
            <person name="Collins M."/>
            <person name="Cronin A."/>
            <person name="Davis P."/>
            <person name="Doggett J."/>
            <person name="Feltwell T."/>
            <person name="Goble A."/>
            <person name="Hamlin N."/>
            <person name="Hauser H."/>
            <person name="Holroyd S."/>
            <person name="Jagels K."/>
            <person name="Leather S."/>
            <person name="Moule S."/>
            <person name="Norberczak H."/>
            <person name="O'Neil S."/>
            <person name="Ormond D."/>
            <person name="Price C."/>
            <person name="Rabbinowitsch E."/>
            <person name="Rutter S."/>
            <person name="Sanders M."/>
            <person name="Saunders D."/>
            <person name="Seeger K."/>
            <person name="Sharp S."/>
            <person name="Simmonds M."/>
            <person name="Skelton J."/>
            <person name="Squares R."/>
            <person name="Squares S."/>
            <person name="Stevens K."/>
            <person name="Unwin L."/>
            <person name="Whitehead S."/>
            <person name="Barrell B.G."/>
            <person name="Maskell D.J."/>
        </authorList>
    </citation>
    <scope>NUCLEOTIDE SEQUENCE [LARGE SCALE GENOMIC DNA]</scope>
    <source>
        <strain>12822 / ATCC BAA-587 / NCTC 13253</strain>
    </source>
</reference>
<sequence length="329" mass="35664">MSKPALRVAVTGAAGQIGYALLFRIASGEMLGKDQPVILQLLEIPDEKAQKALKGVIMELEDCAFPLLHEVTAHSDPRTAFKDADVALLVGARPRGPGMERKDLLSVNAQIFTAQGRALNDVASRNVKVLVVGNPANTNAYIAMKSAPDLPAKNFTAMLRLDHNRALSQLSAKSGKRVADIEKLIVWGNHSPTMYPDFRFATVGGQGLTQLINDDAWNRDTFIPTVGKRGAAIIEARGLSSAASAANAAIDHVRDWVLGSNGKWVTMGIPSDGSYGIPEGIIYGFPVVTENGEYKMIKDLEIDAFSRERLDFTLKELLEERDGVKDLLK</sequence>
<proteinExistence type="inferred from homology"/>
<feature type="initiator methionine" description="Removed" evidence="1">
    <location>
        <position position="1"/>
    </location>
</feature>
<feature type="chain" id="PRO_0000113350" description="Malate dehydrogenase">
    <location>
        <begin position="2"/>
        <end position="329"/>
    </location>
</feature>
<feature type="active site" description="Proton acceptor" evidence="2">
    <location>
        <position position="190"/>
    </location>
</feature>
<feature type="binding site" evidence="2">
    <location>
        <begin position="12"/>
        <end position="18"/>
    </location>
    <ligand>
        <name>NAD(+)</name>
        <dbReference type="ChEBI" id="CHEBI:57540"/>
    </ligand>
</feature>
<feature type="binding site" evidence="2">
    <location>
        <position position="95"/>
    </location>
    <ligand>
        <name>substrate</name>
    </ligand>
</feature>
<feature type="binding site" evidence="2">
    <location>
        <position position="101"/>
    </location>
    <ligand>
        <name>substrate</name>
    </ligand>
</feature>
<feature type="binding site" evidence="2">
    <location>
        <position position="108"/>
    </location>
    <ligand>
        <name>NAD(+)</name>
        <dbReference type="ChEBI" id="CHEBI:57540"/>
    </ligand>
</feature>
<feature type="binding site" evidence="2">
    <location>
        <position position="115"/>
    </location>
    <ligand>
        <name>NAD(+)</name>
        <dbReference type="ChEBI" id="CHEBI:57540"/>
    </ligand>
</feature>
<feature type="binding site" evidence="2">
    <location>
        <begin position="132"/>
        <end position="134"/>
    </location>
    <ligand>
        <name>NAD(+)</name>
        <dbReference type="ChEBI" id="CHEBI:57540"/>
    </ligand>
</feature>
<feature type="binding site" evidence="2">
    <location>
        <position position="134"/>
    </location>
    <ligand>
        <name>substrate</name>
    </ligand>
</feature>
<feature type="binding site" evidence="2">
    <location>
        <position position="165"/>
    </location>
    <ligand>
        <name>substrate</name>
    </ligand>
</feature>
<evidence type="ECO:0000250" key="1"/>
<evidence type="ECO:0000255" key="2">
    <source>
        <dbReference type="HAMAP-Rule" id="MF_01517"/>
    </source>
</evidence>